<sequence>MNKGPRHRPKFLSKKGKKLRIMVAGSSYTSYQACINSLCSKQILEAETEIDPLKAHIDRILEIREFNADILEDEFHVDLTVIEVNGFGDKIDNSASFEVVTHYLESQFDQALIEESKIKRNSKFTDTRVDALLYFIAPRGHCLSEFDLEAMKRFSKRVNVIPVIGNSNAFTEEELKNFKDVIMKDLKQCNIKVFDFPWDPEEDEDEVIEDNKRLWESVPFAVSGGVSEEDEEGYQRIVKKFQWGTFVIDDPAHSDFLNLKTVLFISHLDILKSITKQTYYENYRTEKLSNDSPSNTSLSLQKQNSIVANEDKRSVNGSERTETRSSIDQSEMRTNVSDSTKSEELKKINSIKVDNTSSLKCDSYGNTKTKTNQLNCEQIGLEVISPKEFPHRTTSSRNSLPNNTTKELEMKKMDDLSHERYENLPFYR</sequence>
<comment type="function">
    <text evidence="4">Septin-like protein involved in the correct orientation of forespore membrane extension during sporulation. Binds phosphatidylinositol 4-phosphate.</text>
</comment>
<comment type="subunit">
    <text evidence="4">Component of the sporulation-specific septin complex composed of at least spn2, spn5, spn6 and spn7.</text>
</comment>
<comment type="subcellular location">
    <subcellularLocation>
        <location>Cytoplasm</location>
    </subcellularLocation>
    <subcellularLocation>
        <location>Nucleus</location>
    </subcellularLocation>
    <subcellularLocation>
        <location>Forespore membrane</location>
        <topology>Peripheral membrane protein</topology>
    </subcellularLocation>
    <text>The sporulation-specific septin complex associates to the forespore membrane and forms partial or complete ring-like structures that curl around each haploid nucleus.</text>
</comment>
<comment type="similarity">
    <text evidence="2">Belongs to the TRAFAC class TrmE-Era-EngA-EngB-Septin-like GTPase superfamily. Septin GTPase family.</text>
</comment>
<gene>
    <name type="primary">spn7</name>
    <name type="ORF">SPBC19F8.01c</name>
    <name type="ORF">SPBC21.08c</name>
</gene>
<proteinExistence type="evidence at protein level"/>
<keyword id="KW-0963">Cytoplasm</keyword>
<keyword id="KW-0342">GTP-binding</keyword>
<keyword id="KW-0446">Lipid-binding</keyword>
<keyword id="KW-0469">Meiosis</keyword>
<keyword id="KW-0472">Membrane</keyword>
<keyword id="KW-0547">Nucleotide-binding</keyword>
<keyword id="KW-0539">Nucleus</keyword>
<keyword id="KW-1185">Reference proteome</keyword>
<keyword id="KW-0749">Sporulation</keyword>
<feature type="chain" id="PRO_0000173509" description="Septin homolog spn7">
    <location>
        <begin position="1"/>
        <end position="428"/>
    </location>
</feature>
<feature type="domain" description="Septin-type G" evidence="2">
    <location>
        <begin position="15"/>
        <end position="290"/>
    </location>
</feature>
<feature type="region of interest" description="G1 motif" evidence="2">
    <location>
        <begin position="25"/>
        <end position="32"/>
    </location>
</feature>
<feature type="region of interest" description="G3 motif" evidence="2">
    <location>
        <begin position="83"/>
        <end position="86"/>
    </location>
</feature>
<feature type="region of interest" description="G4 motif" evidence="2">
    <location>
        <begin position="165"/>
        <end position="168"/>
    </location>
</feature>
<feature type="region of interest" description="Disordered" evidence="3">
    <location>
        <begin position="287"/>
        <end position="345"/>
    </location>
</feature>
<feature type="region of interest" description="Disordered" evidence="3">
    <location>
        <begin position="387"/>
        <end position="414"/>
    </location>
</feature>
<feature type="compositionally biased region" description="Polar residues" evidence="3">
    <location>
        <begin position="290"/>
        <end position="307"/>
    </location>
</feature>
<feature type="compositionally biased region" description="Basic and acidic residues" evidence="3">
    <location>
        <begin position="309"/>
        <end position="325"/>
    </location>
</feature>
<feature type="compositionally biased region" description="Polar residues" evidence="3">
    <location>
        <begin position="326"/>
        <end position="339"/>
    </location>
</feature>
<feature type="compositionally biased region" description="Polar residues" evidence="3">
    <location>
        <begin position="392"/>
        <end position="405"/>
    </location>
</feature>
<feature type="binding site" evidence="1">
    <location>
        <begin position="25"/>
        <end position="32"/>
    </location>
    <ligand>
        <name>GTP</name>
        <dbReference type="ChEBI" id="CHEBI:37565"/>
    </ligand>
</feature>
<feature type="binding site" evidence="1">
    <location>
        <position position="86"/>
    </location>
    <ligand>
        <name>GTP</name>
        <dbReference type="ChEBI" id="CHEBI:37565"/>
    </ligand>
</feature>
<feature type="binding site" evidence="1">
    <location>
        <begin position="166"/>
        <end position="174"/>
    </location>
    <ligand>
        <name>GTP</name>
        <dbReference type="ChEBI" id="CHEBI:37565"/>
    </ligand>
</feature>
<feature type="binding site" evidence="1">
    <location>
        <position position="224"/>
    </location>
    <ligand>
        <name>GTP</name>
        <dbReference type="ChEBI" id="CHEBI:37565"/>
    </ligand>
</feature>
<dbReference type="EMBL" id="CU329671">
    <property type="protein sequence ID" value="CAD99124.2"/>
    <property type="molecule type" value="Genomic_DNA"/>
</dbReference>
<dbReference type="EMBL" id="AF417166">
    <property type="protein sequence ID" value="AAL13302.1"/>
    <property type="molecule type" value="mRNA"/>
</dbReference>
<dbReference type="PIR" id="T39824">
    <property type="entry name" value="T39824"/>
</dbReference>
<dbReference type="RefSeq" id="XP_001713143.1">
    <property type="nucleotide sequence ID" value="XM_001713091.2"/>
</dbReference>
<dbReference type="SMR" id="O60165"/>
<dbReference type="BioGRID" id="276941">
    <property type="interactions" value="6"/>
</dbReference>
<dbReference type="FunCoup" id="O60165">
    <property type="interactions" value="6"/>
</dbReference>
<dbReference type="STRING" id="284812.O60165"/>
<dbReference type="iPTMnet" id="O60165"/>
<dbReference type="PaxDb" id="4896-SPBC19F8.01c.1"/>
<dbReference type="EnsemblFungi" id="SPBC19F8.01c.1">
    <property type="protein sequence ID" value="SPBC19F8.01c.1:pep"/>
    <property type="gene ID" value="SPBC19F8.01c"/>
</dbReference>
<dbReference type="PomBase" id="SPBC19F8.01c">
    <property type="gene designation" value="spn7"/>
</dbReference>
<dbReference type="VEuPathDB" id="FungiDB:SPBC19F8.01c"/>
<dbReference type="eggNOG" id="KOG2655">
    <property type="taxonomic scope" value="Eukaryota"/>
</dbReference>
<dbReference type="HOGENOM" id="CLU_017718_7_4_1"/>
<dbReference type="InParanoid" id="O60165"/>
<dbReference type="OMA" id="AHGRFEN"/>
<dbReference type="PhylomeDB" id="O60165"/>
<dbReference type="PRO" id="PR:O60165"/>
<dbReference type="Proteomes" id="UP000002485">
    <property type="component" value="Chromosome II"/>
</dbReference>
<dbReference type="GO" id="GO:0032153">
    <property type="term" value="C:cell division site"/>
    <property type="evidence" value="ECO:0000318"/>
    <property type="project" value="GO_Central"/>
</dbReference>
<dbReference type="GO" id="GO:0005829">
    <property type="term" value="C:cytosol"/>
    <property type="evidence" value="ECO:0007005"/>
    <property type="project" value="PomBase"/>
</dbReference>
<dbReference type="GO" id="GO:0032175">
    <property type="term" value="C:mating projection septin ring"/>
    <property type="evidence" value="ECO:0000314"/>
    <property type="project" value="PomBase"/>
</dbReference>
<dbReference type="GO" id="GO:0032152">
    <property type="term" value="C:meiotic septin complex"/>
    <property type="evidence" value="ECO:0000314"/>
    <property type="project" value="PomBase"/>
</dbReference>
<dbReference type="GO" id="GO:0016020">
    <property type="term" value="C:membrane"/>
    <property type="evidence" value="ECO:0007669"/>
    <property type="project" value="UniProtKB-KW"/>
</dbReference>
<dbReference type="GO" id="GO:0015630">
    <property type="term" value="C:microtubule cytoskeleton"/>
    <property type="evidence" value="ECO:0000318"/>
    <property type="project" value="GO_Central"/>
</dbReference>
<dbReference type="GO" id="GO:0005634">
    <property type="term" value="C:nucleus"/>
    <property type="evidence" value="ECO:0007005"/>
    <property type="project" value="PomBase"/>
</dbReference>
<dbReference type="GO" id="GO:0032169">
    <property type="term" value="C:prospore septin ring"/>
    <property type="evidence" value="ECO:0000314"/>
    <property type="project" value="PomBase"/>
</dbReference>
<dbReference type="GO" id="GO:0031105">
    <property type="term" value="C:septin complex"/>
    <property type="evidence" value="ECO:0000318"/>
    <property type="project" value="GO_Central"/>
</dbReference>
<dbReference type="GO" id="GO:0005940">
    <property type="term" value="C:septin ring"/>
    <property type="evidence" value="ECO:0000318"/>
    <property type="project" value="GO_Central"/>
</dbReference>
<dbReference type="GO" id="GO:0005525">
    <property type="term" value="F:GTP binding"/>
    <property type="evidence" value="ECO:0000255"/>
    <property type="project" value="PomBase"/>
</dbReference>
<dbReference type="GO" id="GO:0003924">
    <property type="term" value="F:GTPase activity"/>
    <property type="evidence" value="ECO:0000318"/>
    <property type="project" value="GO_Central"/>
</dbReference>
<dbReference type="GO" id="GO:0008289">
    <property type="term" value="F:lipid binding"/>
    <property type="evidence" value="ECO:0007669"/>
    <property type="project" value="UniProtKB-KW"/>
</dbReference>
<dbReference type="GO" id="GO:0060090">
    <property type="term" value="F:molecular adaptor activity"/>
    <property type="evidence" value="ECO:0000318"/>
    <property type="project" value="GO_Central"/>
</dbReference>
<dbReference type="GO" id="GO:0061640">
    <property type="term" value="P:cytoskeleton-dependent cytokinesis"/>
    <property type="evidence" value="ECO:0000318"/>
    <property type="project" value="GO_Central"/>
</dbReference>
<dbReference type="GO" id="GO:0008104">
    <property type="term" value="P:protein localization"/>
    <property type="evidence" value="ECO:0000318"/>
    <property type="project" value="GO_Central"/>
</dbReference>
<dbReference type="GO" id="GO:0070583">
    <property type="term" value="P:spore membrane bending pathway"/>
    <property type="evidence" value="ECO:0000315"/>
    <property type="project" value="PomBase"/>
</dbReference>
<dbReference type="Gene3D" id="3.40.50.300">
    <property type="entry name" value="P-loop containing nucleotide triphosphate hydrolases"/>
    <property type="match status" value="1"/>
</dbReference>
<dbReference type="InterPro" id="IPR030379">
    <property type="entry name" value="G_SEPTIN_dom"/>
</dbReference>
<dbReference type="InterPro" id="IPR027417">
    <property type="entry name" value="P-loop_NTPase"/>
</dbReference>
<dbReference type="InterPro" id="IPR016491">
    <property type="entry name" value="Septin"/>
</dbReference>
<dbReference type="PANTHER" id="PTHR18884">
    <property type="entry name" value="SEPTIN"/>
    <property type="match status" value="1"/>
</dbReference>
<dbReference type="Pfam" id="PF00735">
    <property type="entry name" value="Septin"/>
    <property type="match status" value="1"/>
</dbReference>
<dbReference type="PIRSF" id="PIRSF006698">
    <property type="entry name" value="Septin"/>
    <property type="match status" value="1"/>
</dbReference>
<dbReference type="PROSITE" id="PS51719">
    <property type="entry name" value="G_SEPTIN"/>
    <property type="match status" value="1"/>
</dbReference>
<protein>
    <recommendedName>
        <fullName>Septin homolog spn7</fullName>
    </recommendedName>
</protein>
<evidence type="ECO:0000250" key="1"/>
<evidence type="ECO:0000255" key="2">
    <source>
        <dbReference type="PROSITE-ProRule" id="PRU01056"/>
    </source>
</evidence>
<evidence type="ECO:0000256" key="3">
    <source>
        <dbReference type="SAM" id="MobiDB-lite"/>
    </source>
</evidence>
<evidence type="ECO:0000269" key="4">
    <source>
    </source>
</evidence>
<accession>O60165</accession>
<accession>O94648</accession>
<accession>Q7Z994</accession>
<accession>Q96US7</accession>
<name>SPN7_SCHPO</name>
<organism>
    <name type="scientific">Schizosaccharomyces pombe (strain 972 / ATCC 24843)</name>
    <name type="common">Fission yeast</name>
    <dbReference type="NCBI Taxonomy" id="284812"/>
    <lineage>
        <taxon>Eukaryota</taxon>
        <taxon>Fungi</taxon>
        <taxon>Dikarya</taxon>
        <taxon>Ascomycota</taxon>
        <taxon>Taphrinomycotina</taxon>
        <taxon>Schizosaccharomycetes</taxon>
        <taxon>Schizosaccharomycetales</taxon>
        <taxon>Schizosaccharomycetaceae</taxon>
        <taxon>Schizosaccharomyces</taxon>
    </lineage>
</organism>
<reference key="1">
    <citation type="journal article" date="2002" name="Nature">
        <title>The genome sequence of Schizosaccharomyces pombe.</title>
        <authorList>
            <person name="Wood V."/>
            <person name="Gwilliam R."/>
            <person name="Rajandream M.A."/>
            <person name="Lyne M.H."/>
            <person name="Lyne R."/>
            <person name="Stewart A."/>
            <person name="Sgouros J.G."/>
            <person name="Peat N."/>
            <person name="Hayles J."/>
            <person name="Baker S.G."/>
            <person name="Basham D."/>
            <person name="Bowman S."/>
            <person name="Brooks K."/>
            <person name="Brown D."/>
            <person name="Brown S."/>
            <person name="Chillingworth T."/>
            <person name="Churcher C.M."/>
            <person name="Collins M."/>
            <person name="Connor R."/>
            <person name="Cronin A."/>
            <person name="Davis P."/>
            <person name="Feltwell T."/>
            <person name="Fraser A."/>
            <person name="Gentles S."/>
            <person name="Goble A."/>
            <person name="Hamlin N."/>
            <person name="Harris D.E."/>
            <person name="Hidalgo J."/>
            <person name="Hodgson G."/>
            <person name="Holroyd S."/>
            <person name="Hornsby T."/>
            <person name="Howarth S."/>
            <person name="Huckle E.J."/>
            <person name="Hunt S."/>
            <person name="Jagels K."/>
            <person name="James K.D."/>
            <person name="Jones L."/>
            <person name="Jones M."/>
            <person name="Leather S."/>
            <person name="McDonald S."/>
            <person name="McLean J."/>
            <person name="Mooney P."/>
            <person name="Moule S."/>
            <person name="Mungall K.L."/>
            <person name="Murphy L.D."/>
            <person name="Niblett D."/>
            <person name="Odell C."/>
            <person name="Oliver K."/>
            <person name="O'Neil S."/>
            <person name="Pearson D."/>
            <person name="Quail M.A."/>
            <person name="Rabbinowitsch E."/>
            <person name="Rutherford K.M."/>
            <person name="Rutter S."/>
            <person name="Saunders D."/>
            <person name="Seeger K."/>
            <person name="Sharp S."/>
            <person name="Skelton J."/>
            <person name="Simmonds M.N."/>
            <person name="Squares R."/>
            <person name="Squares S."/>
            <person name="Stevens K."/>
            <person name="Taylor K."/>
            <person name="Taylor R.G."/>
            <person name="Tivey A."/>
            <person name="Walsh S.V."/>
            <person name="Warren T."/>
            <person name="Whitehead S."/>
            <person name="Woodward J.R."/>
            <person name="Volckaert G."/>
            <person name="Aert R."/>
            <person name="Robben J."/>
            <person name="Grymonprez B."/>
            <person name="Weltjens I."/>
            <person name="Vanstreels E."/>
            <person name="Rieger M."/>
            <person name="Schaefer M."/>
            <person name="Mueller-Auer S."/>
            <person name="Gabel C."/>
            <person name="Fuchs M."/>
            <person name="Duesterhoeft A."/>
            <person name="Fritzc C."/>
            <person name="Holzer E."/>
            <person name="Moestl D."/>
            <person name="Hilbert H."/>
            <person name="Borzym K."/>
            <person name="Langer I."/>
            <person name="Beck A."/>
            <person name="Lehrach H."/>
            <person name="Reinhardt R."/>
            <person name="Pohl T.M."/>
            <person name="Eger P."/>
            <person name="Zimmermann W."/>
            <person name="Wedler H."/>
            <person name="Wambutt R."/>
            <person name="Purnelle B."/>
            <person name="Goffeau A."/>
            <person name="Cadieu E."/>
            <person name="Dreano S."/>
            <person name="Gloux S."/>
            <person name="Lelaure V."/>
            <person name="Mottier S."/>
            <person name="Galibert F."/>
            <person name="Aves S.J."/>
            <person name="Xiang Z."/>
            <person name="Hunt C."/>
            <person name="Moore K."/>
            <person name="Hurst S.M."/>
            <person name="Lucas M."/>
            <person name="Rochet M."/>
            <person name="Gaillardin C."/>
            <person name="Tallada V.A."/>
            <person name="Garzon A."/>
            <person name="Thode G."/>
            <person name="Daga R.R."/>
            <person name="Cruzado L."/>
            <person name="Jimenez J."/>
            <person name="Sanchez M."/>
            <person name="del Rey F."/>
            <person name="Benito J."/>
            <person name="Dominguez A."/>
            <person name="Revuelta J.L."/>
            <person name="Moreno S."/>
            <person name="Armstrong J."/>
            <person name="Forsburg S.L."/>
            <person name="Cerutti L."/>
            <person name="Lowe T."/>
            <person name="McCombie W.R."/>
            <person name="Paulsen I."/>
            <person name="Potashkin J."/>
            <person name="Shpakovski G.V."/>
            <person name="Ussery D."/>
            <person name="Barrell B.G."/>
            <person name="Nurse P."/>
        </authorList>
    </citation>
    <scope>NUCLEOTIDE SEQUENCE [LARGE SCALE GENOMIC DNA]</scope>
    <source>
        <strain>972 / ATCC 24843</strain>
    </source>
</reference>
<reference key="2">
    <citation type="submission" date="2001-09" db="EMBL/GenBank/DDBJ databases">
        <title>Roles of septins in the fission yeast S. pombe.</title>
        <authorList>
            <person name="Wu J.-Q."/>
            <person name="Pringle J.R."/>
        </authorList>
    </citation>
    <scope>NUCLEOTIDE SEQUENCE [MRNA] OF 298-428</scope>
</reference>
<reference key="3">
    <citation type="submission" date="2001-03" db="UniProtKB">
        <authorList>
            <person name="Wu J.-Q."/>
            <person name="Pringle J.R."/>
        </authorList>
    </citation>
    <scope>CHARACTERIZATION</scope>
</reference>
<reference key="4">
    <citation type="journal article" date="2006" name="Nat. Biotechnol.">
        <title>ORFeome cloning and global analysis of protein localization in the fission yeast Schizosaccharomyces pombe.</title>
        <authorList>
            <person name="Matsuyama A."/>
            <person name="Arai R."/>
            <person name="Yashiroda Y."/>
            <person name="Shirai A."/>
            <person name="Kamata A."/>
            <person name="Sekido S."/>
            <person name="Kobayashi Y."/>
            <person name="Hashimoto A."/>
            <person name="Hamamoto M."/>
            <person name="Hiraoka Y."/>
            <person name="Horinouchi S."/>
            <person name="Yoshida M."/>
        </authorList>
    </citation>
    <scope>SUBCELLULAR LOCATION [LARGE SCALE ANALYSIS]</scope>
</reference>
<reference key="5">
    <citation type="journal article" date="2010" name="Mol. Cell. Biol.">
        <title>Role of septins in the orientation of forespore membrane extension during sporulation in fission yeast.</title>
        <authorList>
            <person name="Onishi M."/>
            <person name="Koga T."/>
            <person name="Hirata A."/>
            <person name="Nakamura T."/>
            <person name="Asakawa H."/>
            <person name="Shimoda C."/>
            <person name="Bahler J."/>
            <person name="Wu J.Q."/>
            <person name="Takegawa K."/>
            <person name="Tachikawa H."/>
            <person name="Pringle J.R."/>
            <person name="Fukui Y."/>
        </authorList>
    </citation>
    <scope>FUNCTION</scope>
    <scope>SUBCELLULAR LOCATION</scope>
    <scope>IDENTIFICATION IN THE SPORULATION-SPECIFIC SEPTIN COMPLEX</scope>
    <scope>PHOSPHATIDYLINOSITOL 4-PHOSPHATE-BINDING</scope>
</reference>